<gene>
    <name evidence="1" type="primary">nadE</name>
    <name type="ordered locus">Sbal195_2658</name>
</gene>
<accession>A9L564</accession>
<keyword id="KW-0067">ATP-binding</keyword>
<keyword id="KW-0436">Ligase</keyword>
<keyword id="KW-0460">Magnesium</keyword>
<keyword id="KW-0479">Metal-binding</keyword>
<keyword id="KW-0520">NAD</keyword>
<keyword id="KW-0547">Nucleotide-binding</keyword>
<reference key="1">
    <citation type="submission" date="2007-11" db="EMBL/GenBank/DDBJ databases">
        <title>Complete sequence of chromosome of Shewanella baltica OS195.</title>
        <authorList>
            <consortium name="US DOE Joint Genome Institute"/>
            <person name="Copeland A."/>
            <person name="Lucas S."/>
            <person name="Lapidus A."/>
            <person name="Barry K."/>
            <person name="Glavina del Rio T."/>
            <person name="Dalin E."/>
            <person name="Tice H."/>
            <person name="Pitluck S."/>
            <person name="Chain P."/>
            <person name="Malfatti S."/>
            <person name="Shin M."/>
            <person name="Vergez L."/>
            <person name="Schmutz J."/>
            <person name="Larimer F."/>
            <person name="Land M."/>
            <person name="Hauser L."/>
            <person name="Kyrpides N."/>
            <person name="Kim E."/>
            <person name="Brettar I."/>
            <person name="Rodrigues J."/>
            <person name="Konstantinidis K."/>
            <person name="Klappenbach J."/>
            <person name="Hofle M."/>
            <person name="Tiedje J."/>
            <person name="Richardson P."/>
        </authorList>
    </citation>
    <scope>NUCLEOTIDE SEQUENCE [LARGE SCALE GENOMIC DNA]</scope>
    <source>
        <strain>OS195</strain>
    </source>
</reference>
<evidence type="ECO:0000255" key="1">
    <source>
        <dbReference type="HAMAP-Rule" id="MF_00193"/>
    </source>
</evidence>
<protein>
    <recommendedName>
        <fullName evidence="1">NH(3)-dependent NAD(+) synthetase</fullName>
        <ecNumber evidence="1">6.3.1.5</ecNumber>
    </recommendedName>
</protein>
<proteinExistence type="inferred from homology"/>
<comment type="function">
    <text evidence="1">Catalyzes the ATP-dependent amidation of deamido-NAD to form NAD. Uses ammonia as a nitrogen source.</text>
</comment>
<comment type="catalytic activity">
    <reaction evidence="1">
        <text>deamido-NAD(+) + NH4(+) + ATP = AMP + diphosphate + NAD(+) + H(+)</text>
        <dbReference type="Rhea" id="RHEA:21188"/>
        <dbReference type="ChEBI" id="CHEBI:15378"/>
        <dbReference type="ChEBI" id="CHEBI:28938"/>
        <dbReference type="ChEBI" id="CHEBI:30616"/>
        <dbReference type="ChEBI" id="CHEBI:33019"/>
        <dbReference type="ChEBI" id="CHEBI:57540"/>
        <dbReference type="ChEBI" id="CHEBI:58437"/>
        <dbReference type="ChEBI" id="CHEBI:456215"/>
        <dbReference type="EC" id="6.3.1.5"/>
    </reaction>
</comment>
<comment type="pathway">
    <text evidence="1">Cofactor biosynthesis; NAD(+) biosynthesis; NAD(+) from deamido-NAD(+) (ammonia route): step 1/1.</text>
</comment>
<comment type="subunit">
    <text evidence="1">Homodimer.</text>
</comment>
<comment type="similarity">
    <text evidence="1">Belongs to the NAD synthetase family.</text>
</comment>
<feature type="chain" id="PRO_1000077600" description="NH(3)-dependent NAD(+) synthetase">
    <location>
        <begin position="1"/>
        <end position="276"/>
    </location>
</feature>
<feature type="binding site" evidence="1">
    <location>
        <begin position="43"/>
        <end position="50"/>
    </location>
    <ligand>
        <name>ATP</name>
        <dbReference type="ChEBI" id="CHEBI:30616"/>
    </ligand>
</feature>
<feature type="binding site" evidence="1">
    <location>
        <position position="49"/>
    </location>
    <ligand>
        <name>Mg(2+)</name>
        <dbReference type="ChEBI" id="CHEBI:18420"/>
    </ligand>
</feature>
<feature type="binding site" evidence="1">
    <location>
        <position position="146"/>
    </location>
    <ligand>
        <name>deamido-NAD(+)</name>
        <dbReference type="ChEBI" id="CHEBI:58437"/>
    </ligand>
</feature>
<feature type="binding site" evidence="1">
    <location>
        <position position="166"/>
    </location>
    <ligand>
        <name>ATP</name>
        <dbReference type="ChEBI" id="CHEBI:30616"/>
    </ligand>
</feature>
<feature type="binding site" evidence="1">
    <location>
        <position position="171"/>
    </location>
    <ligand>
        <name>Mg(2+)</name>
        <dbReference type="ChEBI" id="CHEBI:18420"/>
    </ligand>
</feature>
<feature type="binding site" evidence="1">
    <location>
        <position position="179"/>
    </location>
    <ligand>
        <name>deamido-NAD(+)</name>
        <dbReference type="ChEBI" id="CHEBI:58437"/>
    </ligand>
</feature>
<feature type="binding site" evidence="1">
    <location>
        <position position="186"/>
    </location>
    <ligand>
        <name>deamido-NAD(+)</name>
        <dbReference type="ChEBI" id="CHEBI:58437"/>
    </ligand>
</feature>
<feature type="binding site" evidence="1">
    <location>
        <position position="195"/>
    </location>
    <ligand>
        <name>ATP</name>
        <dbReference type="ChEBI" id="CHEBI:30616"/>
    </ligand>
</feature>
<feature type="binding site" evidence="1">
    <location>
        <position position="217"/>
    </location>
    <ligand>
        <name>ATP</name>
        <dbReference type="ChEBI" id="CHEBI:30616"/>
    </ligand>
</feature>
<feature type="binding site" evidence="1">
    <location>
        <begin position="266"/>
        <end position="267"/>
    </location>
    <ligand>
        <name>deamido-NAD(+)</name>
        <dbReference type="ChEBI" id="CHEBI:58437"/>
    </ligand>
</feature>
<name>NADE_SHEB9</name>
<sequence>MKAQILREMKVLTAIEPEFEVQRRVAFIKTKLKEARSKALVLGISGGVDSSTAGRLCQLAVDSLNHENSQGGYQFIAVRLPYQIQKDEHEAQLACQFIQPSKLVTVNVHQGVDGVHSATVAALAEAGLPLPDVAKVDFVKGNVKARMRMIAQYELAGLVGGLVVGTDHSAENITGFYTKWGDGACDLAPLFGLNKRQVRQLAAYLGAPESLVHKAPTADLEDNKPLLEDEVALGLTYAQIDDFLEGKDVGKAVEDKLIGIYKATQHKRQPIPTIYD</sequence>
<dbReference type="EC" id="6.3.1.5" evidence="1"/>
<dbReference type="EMBL" id="CP000891">
    <property type="protein sequence ID" value="ABX49826.1"/>
    <property type="molecule type" value="Genomic_DNA"/>
</dbReference>
<dbReference type="RefSeq" id="WP_006086216.1">
    <property type="nucleotide sequence ID" value="NC_009997.1"/>
</dbReference>
<dbReference type="SMR" id="A9L564"/>
<dbReference type="GeneID" id="11772748"/>
<dbReference type="KEGG" id="sbn:Sbal195_2658"/>
<dbReference type="HOGENOM" id="CLU_059327_3_0_6"/>
<dbReference type="UniPathway" id="UPA00253">
    <property type="reaction ID" value="UER00333"/>
</dbReference>
<dbReference type="Proteomes" id="UP000000770">
    <property type="component" value="Chromosome"/>
</dbReference>
<dbReference type="GO" id="GO:0005737">
    <property type="term" value="C:cytoplasm"/>
    <property type="evidence" value="ECO:0007669"/>
    <property type="project" value="InterPro"/>
</dbReference>
<dbReference type="GO" id="GO:0005524">
    <property type="term" value="F:ATP binding"/>
    <property type="evidence" value="ECO:0007669"/>
    <property type="project" value="UniProtKB-UniRule"/>
</dbReference>
<dbReference type="GO" id="GO:0004359">
    <property type="term" value="F:glutaminase activity"/>
    <property type="evidence" value="ECO:0007669"/>
    <property type="project" value="InterPro"/>
</dbReference>
<dbReference type="GO" id="GO:0046872">
    <property type="term" value="F:metal ion binding"/>
    <property type="evidence" value="ECO:0007669"/>
    <property type="project" value="UniProtKB-KW"/>
</dbReference>
<dbReference type="GO" id="GO:0003952">
    <property type="term" value="F:NAD+ synthase (glutamine-hydrolyzing) activity"/>
    <property type="evidence" value="ECO:0007669"/>
    <property type="project" value="InterPro"/>
</dbReference>
<dbReference type="GO" id="GO:0008795">
    <property type="term" value="F:NAD+ synthase activity"/>
    <property type="evidence" value="ECO:0007669"/>
    <property type="project" value="UniProtKB-UniRule"/>
</dbReference>
<dbReference type="GO" id="GO:0009435">
    <property type="term" value="P:NAD biosynthetic process"/>
    <property type="evidence" value="ECO:0007669"/>
    <property type="project" value="UniProtKB-UniRule"/>
</dbReference>
<dbReference type="CDD" id="cd00553">
    <property type="entry name" value="NAD_synthase"/>
    <property type="match status" value="1"/>
</dbReference>
<dbReference type="FunFam" id="3.40.50.620:FF:000015">
    <property type="entry name" value="NH(3)-dependent NAD(+) synthetase"/>
    <property type="match status" value="1"/>
</dbReference>
<dbReference type="Gene3D" id="3.40.50.620">
    <property type="entry name" value="HUPs"/>
    <property type="match status" value="1"/>
</dbReference>
<dbReference type="HAMAP" id="MF_00193">
    <property type="entry name" value="NadE_ammonia_dep"/>
    <property type="match status" value="1"/>
</dbReference>
<dbReference type="InterPro" id="IPR022310">
    <property type="entry name" value="NAD/GMP_synthase"/>
</dbReference>
<dbReference type="InterPro" id="IPR003694">
    <property type="entry name" value="NAD_synthase"/>
</dbReference>
<dbReference type="InterPro" id="IPR022926">
    <property type="entry name" value="NH(3)-dep_NAD(+)_synth"/>
</dbReference>
<dbReference type="InterPro" id="IPR014729">
    <property type="entry name" value="Rossmann-like_a/b/a_fold"/>
</dbReference>
<dbReference type="NCBIfam" id="TIGR00552">
    <property type="entry name" value="nadE"/>
    <property type="match status" value="1"/>
</dbReference>
<dbReference type="NCBIfam" id="NF001979">
    <property type="entry name" value="PRK00768.1"/>
    <property type="match status" value="1"/>
</dbReference>
<dbReference type="PANTHER" id="PTHR23090">
    <property type="entry name" value="NH 3 /GLUTAMINE-DEPENDENT NAD + SYNTHETASE"/>
    <property type="match status" value="1"/>
</dbReference>
<dbReference type="PANTHER" id="PTHR23090:SF7">
    <property type="entry name" value="NH(3)-DEPENDENT NAD(+) SYNTHETASE"/>
    <property type="match status" value="1"/>
</dbReference>
<dbReference type="Pfam" id="PF02540">
    <property type="entry name" value="NAD_synthase"/>
    <property type="match status" value="1"/>
</dbReference>
<dbReference type="SUPFAM" id="SSF52402">
    <property type="entry name" value="Adenine nucleotide alpha hydrolases-like"/>
    <property type="match status" value="1"/>
</dbReference>
<organism>
    <name type="scientific">Shewanella baltica (strain OS195)</name>
    <dbReference type="NCBI Taxonomy" id="399599"/>
    <lineage>
        <taxon>Bacteria</taxon>
        <taxon>Pseudomonadati</taxon>
        <taxon>Pseudomonadota</taxon>
        <taxon>Gammaproteobacteria</taxon>
        <taxon>Alteromonadales</taxon>
        <taxon>Shewanellaceae</taxon>
        <taxon>Shewanella</taxon>
    </lineage>
</organism>